<name>MMM1_PYRTR</name>
<comment type="function">
    <text evidence="1">Component of the ERMES/MDM complex, which serves as a molecular tether to connect the endoplasmic reticulum (ER) and mitochondria. Components of this complex are involved in the control of mitochondrial shape and protein biogenesis, and function in nonvesicular lipid trafficking between the ER and mitochondria. The MDM12-mmm1 subcomplex functions in the major beta-barrel assembly pathway that is responsible for biogenesis of all outer membrane beta-barrel proteins, and acts in a late step after the SAM complex. The MDM10-MDM12-mmm1 subcomplex further acts in the TOM40-specific pathway after the action of the MDM12-mmm1 complex. Essential for establishing and maintaining the structure of mitochondria and maintenance of mtDNA nucleoids.</text>
</comment>
<comment type="subunit">
    <text evidence="1">Homodimer. Component of the ER-mitochondria encounter structure (ERMES) or MDM complex, composed of mmm1, MDM10, MDM12 and MDM34. A mmm1 homodimer associates with one molecule of MDM12 on each side in a pairwise head-to-tail manner, and the SMP-LTD domains of mmm1 and MDM12 generate a continuous hydrophobic tunnel for phospholipid trafficking.</text>
</comment>
<comment type="subcellular location">
    <subcellularLocation>
        <location evidence="1">Endoplasmic reticulum membrane</location>
        <topology evidence="1">Single-pass type I membrane protein</topology>
    </subcellularLocation>
    <text evidence="1">The ERMES/MDM complex localizes to a few discrete foci (around 10 per single cell), that represent mitochondria-endoplasmic reticulum junctions. These foci are often found next to mtDNA nucleoids.</text>
</comment>
<comment type="domain">
    <text evidence="1">The SMP-LTD domain is a barrel-like domain that can bind various types of glycerophospholipids in its interior and mediate their transfer between two adjacent bilayers.</text>
</comment>
<comment type="similarity">
    <text evidence="1">Belongs to the MMM1 family.</text>
</comment>
<reference key="1">
    <citation type="journal article" date="2013" name="G3 (Bethesda)">
        <title>Comparative genomics of a plant-pathogenic fungus, Pyrenophora tritici-repentis, reveals transduplication and the impact of repeat elements on pathogenicity and population divergence.</title>
        <authorList>
            <person name="Manning V.A."/>
            <person name="Pandelova I."/>
            <person name="Dhillon B."/>
            <person name="Wilhelm L.J."/>
            <person name="Goodwin S.B."/>
            <person name="Berlin A.M."/>
            <person name="Figueroa M."/>
            <person name="Freitag M."/>
            <person name="Hane J.K."/>
            <person name="Henrissat B."/>
            <person name="Holman W.H."/>
            <person name="Kodira C.D."/>
            <person name="Martin J."/>
            <person name="Oliver R.P."/>
            <person name="Robbertse B."/>
            <person name="Schackwitz W."/>
            <person name="Schwartz D.C."/>
            <person name="Spatafora J.W."/>
            <person name="Turgeon B.G."/>
            <person name="Yandava C."/>
            <person name="Young S."/>
            <person name="Zhou S."/>
            <person name="Zeng Q."/>
            <person name="Grigoriev I.V."/>
            <person name="Ma L.-J."/>
            <person name="Ciuffetti L.M."/>
        </authorList>
    </citation>
    <scope>NUCLEOTIDE SEQUENCE [LARGE SCALE GENOMIC DNA]</scope>
    <source>
        <strain>Pt-1C-BFP</strain>
    </source>
</reference>
<dbReference type="EMBL" id="DS231615">
    <property type="protein sequence ID" value="EDU40624.1"/>
    <property type="molecule type" value="Genomic_DNA"/>
</dbReference>
<dbReference type="RefSeq" id="XP_001931519.1">
    <property type="nucleotide sequence ID" value="XM_001931484.1"/>
</dbReference>
<dbReference type="SMR" id="B2VVB9"/>
<dbReference type="FunCoup" id="B2VVB9">
    <property type="interactions" value="65"/>
</dbReference>
<dbReference type="STRING" id="426418.B2VVB9"/>
<dbReference type="EnsemblFungi" id="EDU40624">
    <property type="protein sequence ID" value="EDU40624"/>
    <property type="gene ID" value="PTRG_01186"/>
</dbReference>
<dbReference type="eggNOG" id="ENOG502QUUW">
    <property type="taxonomic scope" value="Eukaryota"/>
</dbReference>
<dbReference type="HOGENOM" id="CLU_032730_1_0_1"/>
<dbReference type="InParanoid" id="B2VVB9"/>
<dbReference type="OMA" id="WSFTQGL"/>
<dbReference type="OrthoDB" id="31866at28556"/>
<dbReference type="Proteomes" id="UP000001471">
    <property type="component" value="Unassembled WGS sequence"/>
</dbReference>
<dbReference type="GO" id="GO:0005789">
    <property type="term" value="C:endoplasmic reticulum membrane"/>
    <property type="evidence" value="ECO:0007669"/>
    <property type="project" value="UniProtKB-SubCell"/>
</dbReference>
<dbReference type="GO" id="GO:0032865">
    <property type="term" value="C:ERMES complex"/>
    <property type="evidence" value="ECO:0007669"/>
    <property type="project" value="UniProtKB-UniRule"/>
</dbReference>
<dbReference type="GO" id="GO:0008289">
    <property type="term" value="F:lipid binding"/>
    <property type="evidence" value="ECO:0007669"/>
    <property type="project" value="UniProtKB-KW"/>
</dbReference>
<dbReference type="GO" id="GO:0120013">
    <property type="term" value="F:lipid transfer activity"/>
    <property type="evidence" value="ECO:0007669"/>
    <property type="project" value="EnsemblFungi"/>
</dbReference>
<dbReference type="GO" id="GO:0015917">
    <property type="term" value="P:aminophospholipid transport"/>
    <property type="evidence" value="ECO:0007669"/>
    <property type="project" value="EnsemblFungi"/>
</dbReference>
<dbReference type="GO" id="GO:0000002">
    <property type="term" value="P:mitochondrial genome maintenance"/>
    <property type="evidence" value="ECO:0007669"/>
    <property type="project" value="UniProtKB-UniRule"/>
</dbReference>
<dbReference type="GO" id="GO:0070096">
    <property type="term" value="P:mitochondrial outer membrane translocase complex assembly"/>
    <property type="evidence" value="ECO:0007669"/>
    <property type="project" value="EnsemblFungi"/>
</dbReference>
<dbReference type="GO" id="GO:1990456">
    <property type="term" value="P:mitochondrion-endoplasmic reticulum membrane tethering"/>
    <property type="evidence" value="ECO:0007669"/>
    <property type="project" value="EnsemblFungi"/>
</dbReference>
<dbReference type="GO" id="GO:0045040">
    <property type="term" value="P:protein insertion into mitochondrial outer membrane"/>
    <property type="evidence" value="ECO:0007669"/>
    <property type="project" value="UniProtKB-UniRule"/>
</dbReference>
<dbReference type="CDD" id="cd21671">
    <property type="entry name" value="SMP_Mmm1"/>
    <property type="match status" value="1"/>
</dbReference>
<dbReference type="HAMAP" id="MF_03103">
    <property type="entry name" value="Mmm1"/>
    <property type="match status" value="1"/>
</dbReference>
<dbReference type="InterPro" id="IPR027537">
    <property type="entry name" value="Mmm1"/>
</dbReference>
<dbReference type="InterPro" id="IPR019411">
    <property type="entry name" value="MMM1_dom"/>
</dbReference>
<dbReference type="InterPro" id="IPR031468">
    <property type="entry name" value="SMP_LBD"/>
</dbReference>
<dbReference type="PANTHER" id="PTHR13466:SF0">
    <property type="entry name" value="SMP-LTD DOMAIN-CONTAINING PROTEIN"/>
    <property type="match status" value="1"/>
</dbReference>
<dbReference type="PANTHER" id="PTHR13466">
    <property type="entry name" value="TEX2 PROTEIN-RELATED"/>
    <property type="match status" value="1"/>
</dbReference>
<dbReference type="Pfam" id="PF10296">
    <property type="entry name" value="MMM1"/>
    <property type="match status" value="1"/>
</dbReference>
<dbReference type="PROSITE" id="PS51847">
    <property type="entry name" value="SMP"/>
    <property type="match status" value="1"/>
</dbReference>
<protein>
    <recommendedName>
        <fullName evidence="1">Maintenance of mitochondrial morphology protein 1</fullName>
    </recommendedName>
</protein>
<sequence length="469" mass="51216">MADEVPTAVPLATPAGSSSLSFTQGFLLGQLSIAILIFCFIKFFIFGEPPSADDRALHLNSLRRARTLAHQQSYKQLRTRANSTSLSLRHKPSTSIIRKGEETRGGPSIATILAKTYYNVKGHQPESLDWFNVLIAQTIAQLRADARQDDAILTSLTEVLNTGSKPDWIGEIKVTEIALGDEFPIFSNCRVMPAEDGFWYGPGSTGNDKERLQARMDVDLSDVITIGVETTLNLNWPKPMSAVLPVALAVSIVRFSGTLAMSFIPSSSPPSTTAPMPSPTSNTHRSSSPSRPASSSGAPPHRPTTLAFTFLDDYRLDLSVRSLVGSRSRLQDVPKIAQLIESRVHAWFDERAVEPRFQQIVLPSLWPRKHNTRGGAPEDTEAAAEGEEGLDEDDFAVVDGNGTAPGSTSYIPSPIAENVTLEERIEAEGAKMREAEIRAGVRKPSASQERSRGRDDRADGMRWRGALPR</sequence>
<feature type="chain" id="PRO_0000384251" description="Maintenance of mitochondrial morphology protein 1">
    <location>
        <begin position="1"/>
        <end position="469"/>
    </location>
</feature>
<feature type="topological domain" description="Lumenal" evidence="1">
    <location>
        <begin position="1"/>
        <end position="25"/>
    </location>
</feature>
<feature type="transmembrane region" description="Helical" evidence="1">
    <location>
        <begin position="26"/>
        <end position="46"/>
    </location>
</feature>
<feature type="topological domain" description="Cytoplasmic" evidence="1">
    <location>
        <begin position="47"/>
        <end position="469"/>
    </location>
</feature>
<feature type="domain" description="SMP-LTD" evidence="1">
    <location>
        <begin position="124"/>
        <end position="363"/>
    </location>
</feature>
<feature type="region of interest" description="Disordered" evidence="2">
    <location>
        <begin position="266"/>
        <end position="304"/>
    </location>
</feature>
<feature type="region of interest" description="Disordered" evidence="2">
    <location>
        <begin position="426"/>
        <end position="469"/>
    </location>
</feature>
<feature type="compositionally biased region" description="Low complexity" evidence="2">
    <location>
        <begin position="266"/>
        <end position="299"/>
    </location>
</feature>
<feature type="compositionally biased region" description="Basic and acidic residues" evidence="2">
    <location>
        <begin position="426"/>
        <end position="439"/>
    </location>
</feature>
<feature type="compositionally biased region" description="Basic and acidic residues" evidence="2">
    <location>
        <begin position="449"/>
        <end position="462"/>
    </location>
</feature>
<proteinExistence type="inferred from homology"/>
<evidence type="ECO:0000255" key="1">
    <source>
        <dbReference type="HAMAP-Rule" id="MF_03103"/>
    </source>
</evidence>
<evidence type="ECO:0000256" key="2">
    <source>
        <dbReference type="SAM" id="MobiDB-lite"/>
    </source>
</evidence>
<organism>
    <name type="scientific">Pyrenophora tritici-repentis (strain Pt-1C-BFP)</name>
    <name type="common">Wheat tan spot fungus</name>
    <name type="synonym">Drechslera tritici-repentis</name>
    <dbReference type="NCBI Taxonomy" id="426418"/>
    <lineage>
        <taxon>Eukaryota</taxon>
        <taxon>Fungi</taxon>
        <taxon>Dikarya</taxon>
        <taxon>Ascomycota</taxon>
        <taxon>Pezizomycotina</taxon>
        <taxon>Dothideomycetes</taxon>
        <taxon>Pleosporomycetidae</taxon>
        <taxon>Pleosporales</taxon>
        <taxon>Pleosporineae</taxon>
        <taxon>Pleosporaceae</taxon>
        <taxon>Pyrenophora</taxon>
    </lineage>
</organism>
<gene>
    <name evidence="1" type="primary">mmm1</name>
    <name type="ORF">PTRG_01186</name>
</gene>
<keyword id="KW-0256">Endoplasmic reticulum</keyword>
<keyword id="KW-0445">Lipid transport</keyword>
<keyword id="KW-0446">Lipid-binding</keyword>
<keyword id="KW-0472">Membrane</keyword>
<keyword id="KW-1185">Reference proteome</keyword>
<keyword id="KW-0812">Transmembrane</keyword>
<keyword id="KW-1133">Transmembrane helix</keyword>
<keyword id="KW-0813">Transport</keyword>
<accession>B2VVB9</accession>